<proteinExistence type="evidence at protein level"/>
<comment type="subunit">
    <text evidence="2">Interacts with isoform 1 and isoform 2.</text>
</comment>
<comment type="subcellular location">
    <subcellularLocation>
        <location evidence="2">Nucleus</location>
    </subcellularLocation>
</comment>
<comment type="alternative products">
    <event type="alternative splicing"/>
    <event type="alternative initiation"/>
    <isoform>
        <id>B3EWF7-1</id>
        <name evidence="2">9</name>
        <name evidence="4">POCR</name>
        <sequence type="displayed"/>
    </isoform>
    <isoform>
        <id>O95278-1</id>
        <name evidence="4">1</name>
        <name evidence="4">A</name>
        <name evidence="4">LDH1</name>
        <name evidence="4">Laf331</name>
        <sequence type="external"/>
    </isoform>
    <isoform>
        <id>O95278-2</id>
        <name evidence="4">2</name>
        <name evidence="4">B</name>
        <name evidence="4">C-terISO</name>
        <name evidence="4">Laf317</name>
        <sequence type="external"/>
    </isoform>
    <isoform>
        <id>O95278-4</id>
        <name evidence="2">4</name>
        <name evidence="4">Laf152</name>
        <sequence type="external"/>
    </isoform>
    <isoform>
        <id>O95278-5</id>
        <name evidence="2">5</name>
        <name evidence="4">Laf224</name>
        <sequence type="external"/>
    </isoform>
    <isoform>
        <id>O95278-6</id>
        <name evidence="2">6</name>
        <name evidence="4">Laf88</name>
        <sequence type="external"/>
    </isoform>
    <isoform>
        <id>O95278-7</id>
        <name evidence="2">7</name>
        <name evidence="4">Laf177</name>
        <sequence type="external"/>
    </isoform>
    <isoform>
        <id>O95278-8</id>
        <name evidence="4">8</name>
        <sequence type="external"/>
    </isoform>
</comment>
<comment type="miscellaneous">
    <molecule>Isoform 9</molecule>
    <text evidence="2">Produced by alternative initiation. Arises due to the use of an alternative initiation codon in exon 1 out of frame with isoform 1 and results in a completely different isoform.</text>
</comment>
<keyword id="KW-0024">Alternative initiation</keyword>
<keyword id="KW-0025">Alternative splicing</keyword>
<keyword id="KW-0539">Nucleus</keyword>
<keyword id="KW-1185">Reference proteome</keyword>
<name>EP2A2_HUMAN</name>
<feature type="chain" id="PRO_0000416051" description="Laforin, isoform 9">
    <location>
        <begin position="1"/>
        <end position="344"/>
    </location>
</feature>
<feature type="region of interest" description="Disordered" evidence="1">
    <location>
        <begin position="1"/>
        <end position="44"/>
    </location>
</feature>
<feature type="region of interest" description="Disordered" evidence="1">
    <location>
        <begin position="58"/>
        <end position="134"/>
    </location>
</feature>
<feature type="region of interest" description="Disordered" evidence="1">
    <location>
        <begin position="158"/>
        <end position="188"/>
    </location>
</feature>
<feature type="region of interest" description="Disordered" evidence="1">
    <location>
        <begin position="320"/>
        <end position="344"/>
    </location>
</feature>
<feature type="compositionally biased region" description="Low complexity" evidence="1">
    <location>
        <begin position="77"/>
        <end position="88"/>
    </location>
</feature>
<feature type="compositionally biased region" description="Gly residues" evidence="1">
    <location>
        <begin position="101"/>
        <end position="131"/>
    </location>
</feature>
<feature type="compositionally biased region" description="Basic residues" evidence="1">
    <location>
        <begin position="179"/>
        <end position="188"/>
    </location>
</feature>
<evidence type="ECO:0000256" key="1">
    <source>
        <dbReference type="SAM" id="MobiDB-lite"/>
    </source>
</evidence>
<evidence type="ECO:0000269" key="2">
    <source>
    </source>
</evidence>
<evidence type="ECO:0000303" key="3">
    <source>
    </source>
</evidence>
<evidence type="ECO:0000305" key="4"/>
<gene>
    <name evidence="3" type="primary">EPM2A</name>
</gene>
<sequence length="344" mass="35169">MHPKEGAEQHVFSPVPGAPTPPPNRCGRLVLGPRLPAAGTPGPGIRAAAARHALPLWGGGATRRGRRPAGAAGGGVAARAGALGAARCRPPEAGRHRGGRRGPGPAGAGPVARGGGAGGRGGGAGRGGAGPRGHVLVQVPEAGAGRRALLGRYCQQTPAPGAERELRPAPPTGASASGRPRRPRRRASRAFCPRPCALPGRPGLTLLCRPRCRRQPRLRLPTDSLDPYSAPGRLPAHSVACPSDLVSAHPVLSFFPTAPASRASALRLPPGAPFALRVPLDLRVPPFAGPLAARPRAADGFNSPTPPWLGFVSSFSCSNSLKKTQNDPTNETSVFANPRQQCAT</sequence>
<dbReference type="EMBL" id="AL023806">
    <property type="status" value="NOT_ANNOTATED_CDS"/>
    <property type="molecule type" value="Genomic_DNA"/>
</dbReference>
<dbReference type="FunCoup" id="B3EWF7">
    <property type="interactions" value="1"/>
</dbReference>
<dbReference type="IntAct" id="B3EWF7">
    <property type="interactions" value="2"/>
</dbReference>
<dbReference type="GlyGen" id="B3EWF7">
    <property type="glycosylation" value="3 sites"/>
</dbReference>
<dbReference type="BioMuta" id="EPM2A"/>
<dbReference type="jPOST" id="B3EWF7"/>
<dbReference type="MassIVE" id="B3EWF7"/>
<dbReference type="ProteomicsDB" id="3471">
    <molecule id="B3EWF7-1"/>
</dbReference>
<dbReference type="Pumba" id="B3EWF7"/>
<dbReference type="AGR" id="HGNC:3413"/>
<dbReference type="GeneCards" id="EPM2A"/>
<dbReference type="GeneReviews" id="EPM2A"/>
<dbReference type="HGNC" id="HGNC:3413">
    <property type="gene designation" value="EPM2A"/>
</dbReference>
<dbReference type="MalaCards" id="EPM2A"/>
<dbReference type="neXtProt" id="NX_B3EWF7"/>
<dbReference type="InParanoid" id="B3EWF7"/>
<dbReference type="OrthoDB" id="273181at2759"/>
<dbReference type="PAN-GO" id="B3EWF7">
    <property type="GO annotations" value="0 GO annotations based on evolutionary models"/>
</dbReference>
<dbReference type="PathwayCommons" id="B3EWF7"/>
<dbReference type="SignaLink" id="B3EWF7"/>
<dbReference type="ChiTaRS" id="EPM2A">
    <property type="organism name" value="human"/>
</dbReference>
<dbReference type="Pharos" id="B3EWF7">
    <property type="development level" value="Tbio"/>
</dbReference>
<dbReference type="Proteomes" id="UP000005640">
    <property type="component" value="Unplaced"/>
</dbReference>
<dbReference type="RNAct" id="B3EWF7">
    <property type="molecule type" value="protein"/>
</dbReference>
<dbReference type="GO" id="GO:0005634">
    <property type="term" value="C:nucleus"/>
    <property type="evidence" value="ECO:0007669"/>
    <property type="project" value="UniProtKB-SubCell"/>
</dbReference>
<dbReference type="GO" id="GO:0032007">
    <property type="term" value="P:negative regulation of TOR signaling"/>
    <property type="evidence" value="ECO:0000315"/>
    <property type="project" value="MGI"/>
</dbReference>
<dbReference type="GO" id="GO:0016239">
    <property type="term" value="P:positive regulation of macroautophagy"/>
    <property type="evidence" value="ECO:0000315"/>
    <property type="project" value="MGI"/>
</dbReference>
<protein>
    <recommendedName>
        <fullName evidence="3">Laforin, isoform 9</fullName>
    </recommendedName>
</protein>
<organism>
    <name type="scientific">Homo sapiens</name>
    <name type="common">Human</name>
    <dbReference type="NCBI Taxonomy" id="9606"/>
    <lineage>
        <taxon>Eukaryota</taxon>
        <taxon>Metazoa</taxon>
        <taxon>Chordata</taxon>
        <taxon>Craniata</taxon>
        <taxon>Vertebrata</taxon>
        <taxon>Euteleostomi</taxon>
        <taxon>Mammalia</taxon>
        <taxon>Eutheria</taxon>
        <taxon>Euarchontoglires</taxon>
        <taxon>Primates</taxon>
        <taxon>Haplorrhini</taxon>
        <taxon>Catarrhini</taxon>
        <taxon>Hominidae</taxon>
        <taxon>Homo</taxon>
    </lineage>
</organism>
<accession>B3EWF7</accession>
<reference evidence="4" key="1">
    <citation type="journal article" date="2003" name="Nature">
        <title>The DNA sequence and analysis of human chromosome 6.</title>
        <authorList>
            <person name="Mungall A.J."/>
            <person name="Palmer S.A."/>
            <person name="Sims S.K."/>
            <person name="Edwards C.A."/>
            <person name="Ashurst J.L."/>
            <person name="Wilming L."/>
            <person name="Jones M.C."/>
            <person name="Horton R."/>
            <person name="Hunt S.E."/>
            <person name="Scott C.E."/>
            <person name="Gilbert J.G.R."/>
            <person name="Clamp M.E."/>
            <person name="Bethel G."/>
            <person name="Milne S."/>
            <person name="Ainscough R."/>
            <person name="Almeida J.P."/>
            <person name="Ambrose K.D."/>
            <person name="Andrews T.D."/>
            <person name="Ashwell R.I.S."/>
            <person name="Babbage A.K."/>
            <person name="Bagguley C.L."/>
            <person name="Bailey J."/>
            <person name="Banerjee R."/>
            <person name="Barker D.J."/>
            <person name="Barlow K.F."/>
            <person name="Bates K."/>
            <person name="Beare D.M."/>
            <person name="Beasley H."/>
            <person name="Beasley O."/>
            <person name="Bird C.P."/>
            <person name="Blakey S.E."/>
            <person name="Bray-Allen S."/>
            <person name="Brook J."/>
            <person name="Brown A.J."/>
            <person name="Brown J.Y."/>
            <person name="Burford D.C."/>
            <person name="Burrill W."/>
            <person name="Burton J."/>
            <person name="Carder C."/>
            <person name="Carter N.P."/>
            <person name="Chapman J.C."/>
            <person name="Clark S.Y."/>
            <person name="Clark G."/>
            <person name="Clee C.M."/>
            <person name="Clegg S."/>
            <person name="Cobley V."/>
            <person name="Collier R.E."/>
            <person name="Collins J.E."/>
            <person name="Colman L.K."/>
            <person name="Corby N.R."/>
            <person name="Coville G.J."/>
            <person name="Culley K.M."/>
            <person name="Dhami P."/>
            <person name="Davies J."/>
            <person name="Dunn M."/>
            <person name="Earthrowl M.E."/>
            <person name="Ellington A.E."/>
            <person name="Evans K.A."/>
            <person name="Faulkner L."/>
            <person name="Francis M.D."/>
            <person name="Frankish A."/>
            <person name="Frankland J."/>
            <person name="French L."/>
            <person name="Garner P."/>
            <person name="Garnett J."/>
            <person name="Ghori M.J."/>
            <person name="Gilby L.M."/>
            <person name="Gillson C.J."/>
            <person name="Glithero R.J."/>
            <person name="Grafham D.V."/>
            <person name="Grant M."/>
            <person name="Gribble S."/>
            <person name="Griffiths C."/>
            <person name="Griffiths M.N.D."/>
            <person name="Hall R."/>
            <person name="Halls K.S."/>
            <person name="Hammond S."/>
            <person name="Harley J.L."/>
            <person name="Hart E.A."/>
            <person name="Heath P.D."/>
            <person name="Heathcott R."/>
            <person name="Holmes S.J."/>
            <person name="Howden P.J."/>
            <person name="Howe K.L."/>
            <person name="Howell G.R."/>
            <person name="Huckle E."/>
            <person name="Humphray S.J."/>
            <person name="Humphries M.D."/>
            <person name="Hunt A.R."/>
            <person name="Johnson C.M."/>
            <person name="Joy A.A."/>
            <person name="Kay M."/>
            <person name="Keenan S.J."/>
            <person name="Kimberley A.M."/>
            <person name="King A."/>
            <person name="Laird G.K."/>
            <person name="Langford C."/>
            <person name="Lawlor S."/>
            <person name="Leongamornlert D.A."/>
            <person name="Leversha M."/>
            <person name="Lloyd C.R."/>
            <person name="Lloyd D.M."/>
            <person name="Loveland J.E."/>
            <person name="Lovell J."/>
            <person name="Martin S."/>
            <person name="Mashreghi-Mohammadi M."/>
            <person name="Maslen G.L."/>
            <person name="Matthews L."/>
            <person name="McCann O.T."/>
            <person name="McLaren S.J."/>
            <person name="McLay K."/>
            <person name="McMurray A."/>
            <person name="Moore M.J.F."/>
            <person name="Mullikin J.C."/>
            <person name="Niblett D."/>
            <person name="Nickerson T."/>
            <person name="Novik K.L."/>
            <person name="Oliver K."/>
            <person name="Overton-Larty E.K."/>
            <person name="Parker A."/>
            <person name="Patel R."/>
            <person name="Pearce A.V."/>
            <person name="Peck A.I."/>
            <person name="Phillimore B.J.C.T."/>
            <person name="Phillips S."/>
            <person name="Plumb R.W."/>
            <person name="Porter K.M."/>
            <person name="Ramsey Y."/>
            <person name="Ranby S.A."/>
            <person name="Rice C.M."/>
            <person name="Ross M.T."/>
            <person name="Searle S.M."/>
            <person name="Sehra H.K."/>
            <person name="Sheridan E."/>
            <person name="Skuce C.D."/>
            <person name="Smith S."/>
            <person name="Smith M."/>
            <person name="Spraggon L."/>
            <person name="Squares S.L."/>
            <person name="Steward C.A."/>
            <person name="Sycamore N."/>
            <person name="Tamlyn-Hall G."/>
            <person name="Tester J."/>
            <person name="Theaker A.J."/>
            <person name="Thomas D.W."/>
            <person name="Thorpe A."/>
            <person name="Tracey A."/>
            <person name="Tromans A."/>
            <person name="Tubby B."/>
            <person name="Wall M."/>
            <person name="Wallis J.M."/>
            <person name="West A.P."/>
            <person name="White S.S."/>
            <person name="Whitehead S.L."/>
            <person name="Whittaker H."/>
            <person name="Wild A."/>
            <person name="Willey D.J."/>
            <person name="Wilmer T.E."/>
            <person name="Wood J.M."/>
            <person name="Wray P.W."/>
            <person name="Wyatt J.C."/>
            <person name="Young L."/>
            <person name="Younger R.M."/>
            <person name="Bentley D.R."/>
            <person name="Coulson A."/>
            <person name="Durbin R.M."/>
            <person name="Hubbard T."/>
            <person name="Sulston J.E."/>
            <person name="Dunham I."/>
            <person name="Rogers J."/>
            <person name="Beck S."/>
        </authorList>
    </citation>
    <scope>NUCLEOTIDE SEQUENCE [LARGE SCALE GENOMIC DNA]</scope>
</reference>
<reference evidence="4" key="2">
    <citation type="journal article" date="2012" name="Genomics">
        <title>Identification and characterization of novel splice variants of the human EPM2A gene mutated in Lafora progressive myoclonus epilepsy.</title>
        <authorList>
            <person name="Dubey D."/>
            <person name="Parihar R."/>
            <person name="Ganesh S."/>
        </authorList>
    </citation>
    <scope>ALTERNATIVE SPLICING (ISOFORMS 4; 5; 6; 7 AND 9)</scope>
    <scope>INTERACTION WITH ISOFORMS 1 AND 2</scope>
    <scope>SUBCELLULAR LOCATION</scope>
</reference>